<keyword id="KW-0998">Cell outer membrane</keyword>
<keyword id="KW-0449">Lipoprotein</keyword>
<keyword id="KW-0472">Membrane</keyword>
<keyword id="KW-0564">Palmitate</keyword>
<keyword id="KW-0614">Plasmid</keyword>
<keyword id="KW-0732">Signal</keyword>
<gene>
    <name evidence="6 10" type="primary">vsp6</name>
    <name evidence="5" type="synonym">vmp6</name>
</gene>
<proteinExistence type="inferred from homology"/>
<name>VSP6_BORHE</name>
<geneLocation type="plasmid" evidence="10">
    <name>lp32-1</name>
</geneLocation>
<dbReference type="EMBL" id="L33898">
    <property type="protein sequence ID" value="AAA59224.1"/>
    <property type="molecule type" value="Genomic_DNA"/>
</dbReference>
<dbReference type="EMBL" id="DQ166207">
    <property type="protein sequence ID" value="AAZ94628.1"/>
    <property type="molecule type" value="Genomic_DNA"/>
</dbReference>
<dbReference type="PIR" id="I40309">
    <property type="entry name" value="I40309"/>
</dbReference>
<dbReference type="SMR" id="Q45214"/>
<dbReference type="GO" id="GO:0009279">
    <property type="term" value="C:cell outer membrane"/>
    <property type="evidence" value="ECO:0007669"/>
    <property type="project" value="UniProtKB-SubCell"/>
</dbReference>
<dbReference type="Gene3D" id="1.20.120.240">
    <property type="entry name" value="Lipoprotein, type 6"/>
    <property type="match status" value="1"/>
</dbReference>
<dbReference type="InterPro" id="IPR001800">
    <property type="entry name" value="Lipoprotein_OspC"/>
</dbReference>
<dbReference type="InterPro" id="IPR036437">
    <property type="entry name" value="OspC-like_sf"/>
</dbReference>
<dbReference type="Pfam" id="PF01441">
    <property type="entry name" value="Lipoprotein_6"/>
    <property type="match status" value="1"/>
</dbReference>
<dbReference type="SUPFAM" id="SSF63515">
    <property type="entry name" value="Outer surface protein C (OspC)"/>
    <property type="match status" value="1"/>
</dbReference>
<dbReference type="PROSITE" id="PS51257">
    <property type="entry name" value="PROKAR_LIPOPROTEIN"/>
    <property type="match status" value="1"/>
</dbReference>
<organism>
    <name type="scientific">Borrelia hermsii</name>
    <dbReference type="NCBI Taxonomy" id="140"/>
    <lineage>
        <taxon>Bacteria</taxon>
        <taxon>Pseudomonadati</taxon>
        <taxon>Spirochaetota</taxon>
        <taxon>Spirochaetia</taxon>
        <taxon>Spirochaetales</taxon>
        <taxon>Borreliaceae</taxon>
        <taxon>Borrelia</taxon>
    </lineage>
</organism>
<evidence type="ECO:0000250" key="1">
    <source>
        <dbReference type="UniProtKB" id="P21875"/>
    </source>
</evidence>
<evidence type="ECO:0000255" key="2"/>
<evidence type="ECO:0000255" key="3">
    <source>
        <dbReference type="PROSITE-ProRule" id="PRU00303"/>
    </source>
</evidence>
<evidence type="ECO:0000269" key="4">
    <source>
    </source>
</evidence>
<evidence type="ECO:0000303" key="5">
    <source>
    </source>
</evidence>
<evidence type="ECO:0000303" key="6">
    <source>
    </source>
</evidence>
<evidence type="ECO:0000305" key="7"/>
<evidence type="ECO:0000305" key="8">
    <source>
    </source>
</evidence>
<evidence type="ECO:0000312" key="9">
    <source>
        <dbReference type="EMBL" id="AAA59224.1"/>
    </source>
</evidence>
<evidence type="ECO:0000312" key="10">
    <source>
        <dbReference type="EMBL" id="AAZ94628.1"/>
    </source>
</evidence>
<protein>
    <recommendedName>
        <fullName evidence="6">Variable small protein 6</fullName>
    </recommendedName>
</protein>
<reference evidence="9" key="1">
    <citation type="journal article" date="1994" name="Cell">
        <title>Antigen diversity in the bacterium B. hermsii through 'somatic' mutations in rearranged vmp genes.</title>
        <authorList>
            <person name="Restrepo B.I."/>
            <person name="Barbour A.G."/>
        </authorList>
    </citation>
    <scope>NUCLEOTIDE SEQUENCE [GENOMIC DNA]</scope>
    <source>
        <strain>ATCC 35209 / HS1</strain>
    </source>
</reference>
<reference evidence="10" key="2">
    <citation type="submission" date="2005-08" db="EMBL/GenBank/DDBJ databases">
        <title>Antigenic variation during relapsing fever through recombination between extragenic sequences.</title>
        <authorList>
            <person name="Dai Q."/>
            <person name="Restrepo B.I."/>
            <person name="Porcella S.F."/>
            <person name="Schwan T.G."/>
            <person name="Barbour A.G."/>
        </authorList>
    </citation>
    <scope>NUCLEOTIDE SEQUENCE [GENOMIC DNA]</scope>
    <source>
        <strain>ATCC 35209 / HS1</strain>
        <plasmid>lp32-1</plasmid>
    </source>
</reference>
<reference evidence="7" key="3">
    <citation type="journal article" date="1998" name="Infect. Immun.">
        <title>Population structure of the relapsing fever spirochete Borrelia hermsii as indicated by polymorphism of two multigene families that encode immunogenic outer surface lipoproteins.</title>
        <authorList>
            <person name="Hinnebusch B.J."/>
            <person name="Barbour A.G."/>
            <person name="Restrepo B.I."/>
            <person name="Schwan T.G."/>
        </authorList>
    </citation>
    <scope>NOMENCLATURE</scope>
</reference>
<accession>Q45214</accession>
<accession>Q3S4W6</accession>
<sequence>MRKRISAIIMTLFMVFMSCNNGGPELKSDEVAKSDGTVLDLAKVSKKIKEASAFAASVKEVETLVKSVDELAKAIGKKIKNDDDGFDTEANKNGSLLAGTLQLMFAVGTKLESLEKIAGISDEVRGKVIVVKTENTALITKLKGGDASLGKNDASDSDAKNAIDKSDVTGGKVRKSLFKLNTAVDALLKAAEGEVEAAIKELTAPVKVEKPSQNN</sequence>
<comment type="function">
    <text evidence="1">The Vlp and Vsp proteins are antigenically distinct proteins, only one vlp or vsp gene is transcriptionally active at any one time. Switching between these genes is a mechanism of host immune response evasion.</text>
</comment>
<comment type="subcellular location">
    <subcellularLocation>
        <location evidence="1">Cell outer membrane</location>
        <topology>Lipid-anchor</topology>
    </subcellularLocation>
</comment>
<comment type="miscellaneous">
    <text evidence="8">Genes for both Vlp and Vsp families are on (usually) unnamed linear plasmids in B.hermsii HS1.</text>
</comment>
<comment type="similarity">
    <text evidence="4">Belongs to the variable small protein (Vsp) family.</text>
</comment>
<feature type="signal peptide" evidence="3">
    <location>
        <begin position="1"/>
        <end position="18"/>
    </location>
</feature>
<feature type="chain" id="PRO_0000244511" description="Variable small protein 6" evidence="2">
    <location>
        <begin position="19"/>
        <end position="215"/>
    </location>
</feature>
<feature type="lipid moiety-binding region" description="N-palmitoyl cysteine" evidence="2 7">
    <location>
        <position position="19"/>
    </location>
</feature>
<feature type="lipid moiety-binding region" description="S-diacylglycerol cysteine" evidence="2 7">
    <location>
        <position position="19"/>
    </location>
</feature>
<feature type="sequence conflict" description="In Ref. 2; AAZ94628." evidence="7" ref="2">
    <original>M</original>
    <variation>T</variation>
    <location>
        <position position="17"/>
    </location>
</feature>
<feature type="sequence conflict" description="In Ref. 2; AAZ94628." evidence="7" ref="2">
    <original>V</original>
    <variation>I</variation>
    <location>
        <position position="44"/>
    </location>
</feature>
<feature type="sequence conflict" description="In Ref. 2; AAZ94628." evidence="7" ref="2">
    <original>A</original>
    <variation>E</variation>
    <location>
        <position position="56"/>
    </location>
</feature>
<feature type="sequence conflict" description="In Ref. 2; AAZ94628." evidence="7" ref="2">
    <original>V</original>
    <variation>I</variation>
    <location>
        <position position="68"/>
    </location>
</feature>
<feature type="sequence conflict" description="In Ref. 2; AAZ94628." evidence="7" ref="2">
    <original>R</original>
    <variation>K</variation>
    <location>
        <position position="125"/>
    </location>
</feature>
<feature type="sequence conflict" description="In Ref. 2; AAZ94628." evidence="7" ref="2">
    <original>S</original>
    <variation>T</variation>
    <location>
        <position position="148"/>
    </location>
</feature>
<feature type="sequence conflict" description="In Ref. 2; AAZ94628." evidence="7" ref="2">
    <original>VRKSLF</original>
    <variation>GKEELI</variation>
    <location>
        <begin position="173"/>
        <end position="178"/>
    </location>
</feature>